<feature type="chain" id="PRO_1000166730" description="Large ribosomal subunit protein bL21">
    <location>
        <begin position="1"/>
        <end position="105"/>
    </location>
</feature>
<accession>B8IEL6</accession>
<keyword id="KW-1185">Reference proteome</keyword>
<keyword id="KW-0687">Ribonucleoprotein</keyword>
<keyword id="KW-0689">Ribosomal protein</keyword>
<keyword id="KW-0694">RNA-binding</keyword>
<keyword id="KW-0699">rRNA-binding</keyword>
<comment type="function">
    <text evidence="1">This protein binds to 23S rRNA in the presence of protein L20.</text>
</comment>
<comment type="subunit">
    <text evidence="1">Part of the 50S ribosomal subunit. Contacts protein L20.</text>
</comment>
<comment type="similarity">
    <text evidence="1">Belongs to the bacterial ribosomal protein bL21 family.</text>
</comment>
<proteinExistence type="inferred from homology"/>
<name>RL21_METNO</name>
<gene>
    <name evidence="1" type="primary">rplU</name>
    <name type="ordered locus">Mnod_4723</name>
</gene>
<reference key="1">
    <citation type="submission" date="2009-01" db="EMBL/GenBank/DDBJ databases">
        <title>Complete sequence of chromosome of Methylobacterium nodulans ORS 2060.</title>
        <authorList>
            <consortium name="US DOE Joint Genome Institute"/>
            <person name="Lucas S."/>
            <person name="Copeland A."/>
            <person name="Lapidus A."/>
            <person name="Glavina del Rio T."/>
            <person name="Dalin E."/>
            <person name="Tice H."/>
            <person name="Bruce D."/>
            <person name="Goodwin L."/>
            <person name="Pitluck S."/>
            <person name="Sims D."/>
            <person name="Brettin T."/>
            <person name="Detter J.C."/>
            <person name="Han C."/>
            <person name="Larimer F."/>
            <person name="Land M."/>
            <person name="Hauser L."/>
            <person name="Kyrpides N."/>
            <person name="Ivanova N."/>
            <person name="Marx C.J."/>
            <person name="Richardson P."/>
        </authorList>
    </citation>
    <scope>NUCLEOTIDE SEQUENCE [LARGE SCALE GENOMIC DNA]</scope>
    <source>
        <strain>LMG 21967 / CNCM I-2342 / ORS 2060</strain>
    </source>
</reference>
<evidence type="ECO:0000255" key="1">
    <source>
        <dbReference type="HAMAP-Rule" id="MF_01363"/>
    </source>
</evidence>
<evidence type="ECO:0000305" key="2"/>
<sequence length="105" mass="11171">MFAVIKTGGKQYRVAANDVITIAKLEGEAGTAVTFGEVLLYADGEGATQVGAPTVSGISVAGEIVAQKRGPKIIAFKKRRRQNSRRKRGHRQDFTVVRVTGISAA</sequence>
<dbReference type="EMBL" id="CP001349">
    <property type="protein sequence ID" value="ACL59588.1"/>
    <property type="molecule type" value="Genomic_DNA"/>
</dbReference>
<dbReference type="RefSeq" id="WP_015931222.1">
    <property type="nucleotide sequence ID" value="NC_011894.1"/>
</dbReference>
<dbReference type="SMR" id="B8IEL6"/>
<dbReference type="STRING" id="460265.Mnod_4723"/>
<dbReference type="KEGG" id="mno:Mnod_4723"/>
<dbReference type="eggNOG" id="COG0261">
    <property type="taxonomic scope" value="Bacteria"/>
</dbReference>
<dbReference type="HOGENOM" id="CLU_061463_3_2_5"/>
<dbReference type="OrthoDB" id="9813334at2"/>
<dbReference type="Proteomes" id="UP000008207">
    <property type="component" value="Chromosome"/>
</dbReference>
<dbReference type="GO" id="GO:0005737">
    <property type="term" value="C:cytoplasm"/>
    <property type="evidence" value="ECO:0007669"/>
    <property type="project" value="UniProtKB-ARBA"/>
</dbReference>
<dbReference type="GO" id="GO:1990904">
    <property type="term" value="C:ribonucleoprotein complex"/>
    <property type="evidence" value="ECO:0007669"/>
    <property type="project" value="UniProtKB-KW"/>
</dbReference>
<dbReference type="GO" id="GO:0005840">
    <property type="term" value="C:ribosome"/>
    <property type="evidence" value="ECO:0007669"/>
    <property type="project" value="UniProtKB-KW"/>
</dbReference>
<dbReference type="GO" id="GO:0019843">
    <property type="term" value="F:rRNA binding"/>
    <property type="evidence" value="ECO:0007669"/>
    <property type="project" value="UniProtKB-UniRule"/>
</dbReference>
<dbReference type="GO" id="GO:0003735">
    <property type="term" value="F:structural constituent of ribosome"/>
    <property type="evidence" value="ECO:0007669"/>
    <property type="project" value="InterPro"/>
</dbReference>
<dbReference type="GO" id="GO:0006412">
    <property type="term" value="P:translation"/>
    <property type="evidence" value="ECO:0007669"/>
    <property type="project" value="UniProtKB-UniRule"/>
</dbReference>
<dbReference type="HAMAP" id="MF_01363">
    <property type="entry name" value="Ribosomal_bL21"/>
    <property type="match status" value="1"/>
</dbReference>
<dbReference type="InterPro" id="IPR028909">
    <property type="entry name" value="bL21-like"/>
</dbReference>
<dbReference type="InterPro" id="IPR036164">
    <property type="entry name" value="bL21-like_sf"/>
</dbReference>
<dbReference type="InterPro" id="IPR001787">
    <property type="entry name" value="Ribosomal_bL21"/>
</dbReference>
<dbReference type="NCBIfam" id="TIGR00061">
    <property type="entry name" value="L21"/>
    <property type="match status" value="1"/>
</dbReference>
<dbReference type="PANTHER" id="PTHR21349">
    <property type="entry name" value="50S RIBOSOMAL PROTEIN L21"/>
    <property type="match status" value="1"/>
</dbReference>
<dbReference type="PANTHER" id="PTHR21349:SF0">
    <property type="entry name" value="LARGE RIBOSOMAL SUBUNIT PROTEIN BL21M"/>
    <property type="match status" value="1"/>
</dbReference>
<dbReference type="Pfam" id="PF00829">
    <property type="entry name" value="Ribosomal_L21p"/>
    <property type="match status" value="1"/>
</dbReference>
<dbReference type="SUPFAM" id="SSF141091">
    <property type="entry name" value="L21p-like"/>
    <property type="match status" value="1"/>
</dbReference>
<organism>
    <name type="scientific">Methylobacterium nodulans (strain LMG 21967 / CNCM I-2342 / ORS 2060)</name>
    <dbReference type="NCBI Taxonomy" id="460265"/>
    <lineage>
        <taxon>Bacteria</taxon>
        <taxon>Pseudomonadati</taxon>
        <taxon>Pseudomonadota</taxon>
        <taxon>Alphaproteobacteria</taxon>
        <taxon>Hyphomicrobiales</taxon>
        <taxon>Methylobacteriaceae</taxon>
        <taxon>Methylobacterium</taxon>
    </lineage>
</organism>
<protein>
    <recommendedName>
        <fullName evidence="1">Large ribosomal subunit protein bL21</fullName>
    </recommendedName>
    <alternativeName>
        <fullName evidence="2">50S ribosomal protein L21</fullName>
    </alternativeName>
</protein>